<sequence length="181" mass="19404">MSSFHATTIFAVQHKGKSAMAGDGQVTFGQAVVMKHTAKKVRRLFGGKVLAGFAGSVADAFTLFEKFETKLEEYGGNLKRAAVELAKEWRSDKMLRQLEAMLIVMNKDSILLVSGTGEVIEPDDGILAIGSGGNYALSAGRALKTHAGDHLTARDIAKAALETAGEICVYTNDQITLEELE</sequence>
<comment type="function">
    <text evidence="1">Protease subunit of a proteasome-like degradation complex.</text>
</comment>
<comment type="subunit">
    <text evidence="1">A double ring-shaped homohexamer of ClpQ is capped on each side by a ring-shaped ClpY homohexamer. The assembly of the ClpQ/ClpY complex is dependent on binding of ATP (By similarity).</text>
</comment>
<comment type="subcellular location">
    <subcellularLocation>
        <location evidence="1">Cytoplasm</location>
    </subcellularLocation>
</comment>
<comment type="similarity">
    <text evidence="2">Belongs to the peptidase T1B family. HslV subfamily.</text>
</comment>
<keyword id="KW-0963">Cytoplasm</keyword>
<keyword id="KW-0378">Hydrolase</keyword>
<keyword id="KW-0479">Metal-binding</keyword>
<keyword id="KW-0645">Protease</keyword>
<keyword id="KW-0720">Serine protease</keyword>
<keyword id="KW-0915">Sodium</keyword>
<protein>
    <recommendedName>
        <fullName>ATP-dependent protease subunit ClpQ</fullName>
        <ecNumber>3.4.21.-</ecNumber>
    </recommendedName>
</protein>
<dbReference type="EC" id="3.4.21.-"/>
<dbReference type="EMBL" id="CP000813">
    <property type="protein sequence ID" value="ABV62196.1"/>
    <property type="molecule type" value="Genomic_DNA"/>
</dbReference>
<dbReference type="RefSeq" id="WP_003211247.1">
    <property type="nucleotide sequence ID" value="NZ_VEIS01000003.1"/>
</dbReference>
<dbReference type="SMR" id="A8FD79"/>
<dbReference type="STRING" id="315750.BPUM_1513"/>
<dbReference type="MEROPS" id="T01.007"/>
<dbReference type="GeneID" id="5620776"/>
<dbReference type="KEGG" id="bpu:BPUM_1513"/>
<dbReference type="eggNOG" id="COG5405">
    <property type="taxonomic scope" value="Bacteria"/>
</dbReference>
<dbReference type="HOGENOM" id="CLU_093872_1_1_9"/>
<dbReference type="OrthoDB" id="9804884at2"/>
<dbReference type="Proteomes" id="UP000001355">
    <property type="component" value="Chromosome"/>
</dbReference>
<dbReference type="GO" id="GO:0009376">
    <property type="term" value="C:HslUV protease complex"/>
    <property type="evidence" value="ECO:0007669"/>
    <property type="project" value="UniProtKB-UniRule"/>
</dbReference>
<dbReference type="GO" id="GO:0005839">
    <property type="term" value="C:proteasome core complex"/>
    <property type="evidence" value="ECO:0007669"/>
    <property type="project" value="InterPro"/>
</dbReference>
<dbReference type="GO" id="GO:0046872">
    <property type="term" value="F:metal ion binding"/>
    <property type="evidence" value="ECO:0007669"/>
    <property type="project" value="UniProtKB-KW"/>
</dbReference>
<dbReference type="GO" id="GO:0008236">
    <property type="term" value="F:serine-type peptidase activity"/>
    <property type="evidence" value="ECO:0007669"/>
    <property type="project" value="UniProtKB-KW"/>
</dbReference>
<dbReference type="GO" id="GO:0004298">
    <property type="term" value="F:threonine-type endopeptidase activity"/>
    <property type="evidence" value="ECO:0007669"/>
    <property type="project" value="InterPro"/>
</dbReference>
<dbReference type="GO" id="GO:0051603">
    <property type="term" value="P:proteolysis involved in protein catabolic process"/>
    <property type="evidence" value="ECO:0007669"/>
    <property type="project" value="InterPro"/>
</dbReference>
<dbReference type="CDD" id="cd01913">
    <property type="entry name" value="protease_HslV"/>
    <property type="match status" value="1"/>
</dbReference>
<dbReference type="Gene3D" id="3.60.20.10">
    <property type="entry name" value="Glutamine Phosphoribosylpyrophosphate, subunit 1, domain 1"/>
    <property type="match status" value="1"/>
</dbReference>
<dbReference type="HAMAP" id="MF_00248">
    <property type="entry name" value="HslV"/>
    <property type="match status" value="1"/>
</dbReference>
<dbReference type="InterPro" id="IPR022281">
    <property type="entry name" value="ATP-dep_Prtase_HsIV_su"/>
</dbReference>
<dbReference type="InterPro" id="IPR029055">
    <property type="entry name" value="Ntn_hydrolases_N"/>
</dbReference>
<dbReference type="InterPro" id="IPR001353">
    <property type="entry name" value="Proteasome_sua/b"/>
</dbReference>
<dbReference type="InterPro" id="IPR023333">
    <property type="entry name" value="Proteasome_suB-type"/>
</dbReference>
<dbReference type="NCBIfam" id="TIGR03692">
    <property type="entry name" value="ATP_dep_HslV"/>
    <property type="match status" value="1"/>
</dbReference>
<dbReference type="NCBIfam" id="NF003964">
    <property type="entry name" value="PRK05456.1"/>
    <property type="match status" value="1"/>
</dbReference>
<dbReference type="PANTHER" id="PTHR32194:SF0">
    <property type="entry name" value="ATP-DEPENDENT PROTEASE SUBUNIT HSLV"/>
    <property type="match status" value="1"/>
</dbReference>
<dbReference type="PANTHER" id="PTHR32194">
    <property type="entry name" value="METALLOPROTEASE TLDD"/>
    <property type="match status" value="1"/>
</dbReference>
<dbReference type="Pfam" id="PF00227">
    <property type="entry name" value="Proteasome"/>
    <property type="match status" value="1"/>
</dbReference>
<dbReference type="PIRSF" id="PIRSF039093">
    <property type="entry name" value="HslV"/>
    <property type="match status" value="1"/>
</dbReference>
<dbReference type="SUPFAM" id="SSF56235">
    <property type="entry name" value="N-terminal nucleophile aminohydrolases (Ntn hydrolases)"/>
    <property type="match status" value="1"/>
</dbReference>
<dbReference type="PROSITE" id="PS51476">
    <property type="entry name" value="PROTEASOME_BETA_2"/>
    <property type="match status" value="1"/>
</dbReference>
<gene>
    <name type="primary">clpQ</name>
    <name type="synonym">hslV</name>
    <name type="ordered locus">BPUM_1513</name>
</gene>
<feature type="initiator methionine" description="Removed" evidence="1">
    <location>
        <position position="1"/>
    </location>
</feature>
<feature type="chain" id="PRO_1000059014" description="ATP-dependent protease subunit ClpQ">
    <location>
        <begin position="2"/>
        <end position="181"/>
    </location>
</feature>
<feature type="active site" evidence="1">
    <location>
        <position position="2"/>
    </location>
</feature>
<feature type="binding site" evidence="1">
    <location>
        <position position="165"/>
    </location>
    <ligand>
        <name>Na(+)</name>
        <dbReference type="ChEBI" id="CHEBI:29101"/>
    </ligand>
</feature>
<feature type="binding site" evidence="1">
    <location>
        <position position="168"/>
    </location>
    <ligand>
        <name>Na(+)</name>
        <dbReference type="ChEBI" id="CHEBI:29101"/>
    </ligand>
</feature>
<feature type="binding site" evidence="1">
    <location>
        <position position="171"/>
    </location>
    <ligand>
        <name>Na(+)</name>
        <dbReference type="ChEBI" id="CHEBI:29101"/>
    </ligand>
</feature>
<reference key="1">
    <citation type="journal article" date="2007" name="PLoS ONE">
        <title>Paradoxical DNA repair and peroxide resistance gene conservation in Bacillus pumilus SAFR-032.</title>
        <authorList>
            <person name="Gioia J."/>
            <person name="Yerrapragada S."/>
            <person name="Qin X."/>
            <person name="Jiang H."/>
            <person name="Igboeli O.C."/>
            <person name="Muzny D."/>
            <person name="Dugan-Rocha S."/>
            <person name="Ding Y."/>
            <person name="Hawes A."/>
            <person name="Liu W."/>
            <person name="Perez L."/>
            <person name="Kovar C."/>
            <person name="Dinh H."/>
            <person name="Lee S."/>
            <person name="Nazareth L."/>
            <person name="Blyth P."/>
            <person name="Holder M."/>
            <person name="Buhay C."/>
            <person name="Tirumalai M.R."/>
            <person name="Liu Y."/>
            <person name="Dasgupta I."/>
            <person name="Bokhetache L."/>
            <person name="Fujita M."/>
            <person name="Karouia F."/>
            <person name="Eswara Moorthy P."/>
            <person name="Siefert J."/>
            <person name="Uzman A."/>
            <person name="Buzumbo P."/>
            <person name="Verma A."/>
            <person name="Zwiya H."/>
            <person name="McWilliams B.D."/>
            <person name="Olowu A."/>
            <person name="Clinkenbeard K.D."/>
            <person name="Newcombe D."/>
            <person name="Golebiewski L."/>
            <person name="Petrosino J.F."/>
            <person name="Nicholson W.L."/>
            <person name="Fox G.E."/>
            <person name="Venkateswaran K."/>
            <person name="Highlander S.K."/>
            <person name="Weinstock G.M."/>
        </authorList>
    </citation>
    <scope>NUCLEOTIDE SEQUENCE [LARGE SCALE GENOMIC DNA]</scope>
    <source>
        <strain>SAFR-032</strain>
    </source>
</reference>
<evidence type="ECO:0000250" key="1"/>
<evidence type="ECO:0000305" key="2"/>
<organism>
    <name type="scientific">Bacillus pumilus (strain SAFR-032)</name>
    <dbReference type="NCBI Taxonomy" id="315750"/>
    <lineage>
        <taxon>Bacteria</taxon>
        <taxon>Bacillati</taxon>
        <taxon>Bacillota</taxon>
        <taxon>Bacilli</taxon>
        <taxon>Bacillales</taxon>
        <taxon>Bacillaceae</taxon>
        <taxon>Bacillus</taxon>
    </lineage>
</organism>
<accession>A8FD79</accession>
<name>CLPQ_BACP2</name>
<proteinExistence type="inferred from homology"/>